<gene>
    <name type="primary">Serpinc1</name>
    <name type="synonym">At3</name>
</gene>
<reference key="1">
    <citation type="journal article" date="1992" name="Thromb. Haemost.">
        <title>Molecular cloning and cell-free expression of mouse antithrombin III.</title>
        <authorList>
            <person name="Wu J.K."/>
            <person name="Sheffield W.P."/>
            <person name="Blajchman M.A."/>
        </authorList>
    </citation>
    <scope>NUCLEOTIDE SEQUENCE [MRNA]</scope>
</reference>
<reference key="2">
    <citation type="journal article" date="2004" name="Genome Res.">
        <title>The status, quality, and expansion of the NIH full-length cDNA project: the Mammalian Gene Collection (MGC).</title>
        <authorList>
            <consortium name="The MGC Project Team"/>
        </authorList>
    </citation>
    <scope>NUCLEOTIDE SEQUENCE [LARGE SCALE MRNA]</scope>
    <source>
        <strain>FVB/N</strain>
        <tissue>Liver</tissue>
    </source>
</reference>
<reference key="3">
    <citation type="journal article" date="2006" name="J. Proteome Res.">
        <title>Proteome-wide characterization of N-glycosylation events by diagonal chromatography.</title>
        <authorList>
            <person name="Ghesquiere B."/>
            <person name="Van Damme J."/>
            <person name="Martens L."/>
            <person name="Vandekerckhove J."/>
            <person name="Gevaert K."/>
        </authorList>
    </citation>
    <scope>GLYCOSYLATION [LARGE SCALE ANALYSIS] AT ASN-188</scope>
    <source>
        <strain>C57BL/6J</strain>
        <tissue>Plasma</tissue>
    </source>
</reference>
<reference key="4">
    <citation type="journal article" date="2007" name="J. Proteome Res.">
        <title>Enhanced analysis of the mouse plasma proteome using cysteine-containing tryptic glycopeptides.</title>
        <authorList>
            <person name="Bernhard O.K."/>
            <person name="Kapp E.A."/>
            <person name="Simpson R.J."/>
        </authorList>
    </citation>
    <scope>GLYCOSYLATION [LARGE SCALE ANALYSIS] AT ASN-129; ASN-168 AND ASN-188</scope>
    <source>
        <strain>C57BL/6J</strain>
        <tissue>Plasma</tissue>
    </source>
</reference>
<reference key="5">
    <citation type="journal article" date="2010" name="Cell">
        <title>A tissue-specific atlas of mouse protein phosphorylation and expression.</title>
        <authorList>
            <person name="Huttlin E.L."/>
            <person name="Jedrychowski M.P."/>
            <person name="Elias J.E."/>
            <person name="Goswami T."/>
            <person name="Rad R."/>
            <person name="Beausoleil S.A."/>
            <person name="Villen J."/>
            <person name="Haas W."/>
            <person name="Sowa M.E."/>
            <person name="Gygi S.P."/>
        </authorList>
    </citation>
    <scope>IDENTIFICATION BY MASS SPECTROMETRY [LARGE SCALE ANALYSIS]</scope>
    <source>
        <tissue>Brown adipose tissue</tissue>
        <tissue>Heart</tissue>
        <tissue>Kidney</tissue>
        <tissue>Liver</tissue>
        <tissue>Lung</tissue>
        <tissue>Pancreas</tissue>
        <tissue>Spleen</tissue>
        <tissue>Testis</tissue>
    </source>
</reference>
<proteinExistence type="evidence at protein level"/>
<organism>
    <name type="scientific">Mus musculus</name>
    <name type="common">Mouse</name>
    <dbReference type="NCBI Taxonomy" id="10090"/>
    <lineage>
        <taxon>Eukaryota</taxon>
        <taxon>Metazoa</taxon>
        <taxon>Chordata</taxon>
        <taxon>Craniata</taxon>
        <taxon>Vertebrata</taxon>
        <taxon>Euteleostomi</taxon>
        <taxon>Mammalia</taxon>
        <taxon>Eutheria</taxon>
        <taxon>Euarchontoglires</taxon>
        <taxon>Glires</taxon>
        <taxon>Rodentia</taxon>
        <taxon>Myomorpha</taxon>
        <taxon>Muroidea</taxon>
        <taxon>Muridae</taxon>
        <taxon>Murinae</taxon>
        <taxon>Mus</taxon>
        <taxon>Mus</taxon>
    </lineage>
</organism>
<keyword id="KW-0094">Blood coagulation</keyword>
<keyword id="KW-1015">Disulfide bond</keyword>
<keyword id="KW-0325">Glycoprotein</keyword>
<keyword id="KW-0356">Hemostasis</keyword>
<keyword id="KW-0358">Heparin-binding</keyword>
<keyword id="KW-0597">Phosphoprotein</keyword>
<keyword id="KW-0646">Protease inhibitor</keyword>
<keyword id="KW-1185">Reference proteome</keyword>
<keyword id="KW-0964">Secreted</keyword>
<keyword id="KW-0722">Serine protease inhibitor</keyword>
<keyword id="KW-0732">Signal</keyword>
<comment type="function">
    <text evidence="1">Most important serine protease inhibitor in plasma that regulates the blood coagulation cascade. AT-III inhibits thrombin, matriptase-3/TMPRSS7, as well as factors IXa, Xa and XIa. Its inhibitory activity is greatly enhanced in the presence of heparin (By similarity).</text>
</comment>
<comment type="subunit">
    <text evidence="1">Forms protease inhibiting heterodimer with TMPRSS7.</text>
</comment>
<comment type="subcellular location">
    <subcellularLocation>
        <location evidence="1">Secreted</location>
        <location evidence="1">Extracellular space</location>
    </subcellularLocation>
</comment>
<comment type="tissue specificity">
    <text>Plasma.</text>
</comment>
<comment type="PTM">
    <text evidence="2">Phosphorylated by FAM20C in the extracellular medium.</text>
</comment>
<comment type="similarity">
    <text evidence="6">Belongs to the serpin family.</text>
</comment>
<name>ANT3_MOUSE</name>
<sequence length="465" mass="52004">MYSPGAGSGAAGERKLCLLSLLLIGALGCAICHGNPVDDICIAKPRDIPVNPLCIYRSPGKKATEEDGSEQKVPEATNRRVWELSKANSRFATNFYQHLADSKNDNDNIFLSPLSISTAFAMTKLGACNDTLKQLMEVFKFDTISEKTSDQIHFFFAKLNCRLYRKANKSSDLVSANRLFGDKSLTFNESYQDVSEVVYGAKLQPLDFKENPEQSRVTINNWVANKTEGRIKDVIPQGAINELTALVLVNTIYFKGLWKSKFSPENTRKEPFYKVDGQSCPVPMMYQEGKFKYRRVAEGTQVLELPFKGDDITMVLILPKPEKSLAKVEQELTPELLQEWLDELSETMLVVHMPRFRTEDGFSLKEQLQDMGLIDLFSPEKSQLPGIVAGGRDDLYVSDAFHKAFLEVNEEGSEAAASTSVVITGRSLNPNRVTFKANRPFLVLIREVALNTIIFMGRVANPCVN</sequence>
<accession>P32261</accession>
<dbReference type="EMBL" id="S47225">
    <property type="protein sequence ID" value="AAB23965.1"/>
    <property type="molecule type" value="mRNA"/>
</dbReference>
<dbReference type="EMBL" id="BC019447">
    <property type="protein sequence ID" value="AAH19447.1"/>
    <property type="molecule type" value="mRNA"/>
</dbReference>
<dbReference type="EMBL" id="BC033377">
    <property type="protein sequence ID" value="AAH33377.1"/>
    <property type="molecule type" value="mRNA"/>
</dbReference>
<dbReference type="CCDS" id="CCDS15411.1"/>
<dbReference type="RefSeq" id="NP_001406885.1">
    <property type="nucleotide sequence ID" value="NM_001419956.1"/>
</dbReference>
<dbReference type="RefSeq" id="NP_543120.1">
    <property type="nucleotide sequence ID" value="NM_080844.5"/>
</dbReference>
<dbReference type="RefSeq" id="XP_006496689.1">
    <property type="nucleotide sequence ID" value="XM_006496626.2"/>
</dbReference>
<dbReference type="SMR" id="P32261"/>
<dbReference type="BioGRID" id="198229">
    <property type="interactions" value="6"/>
</dbReference>
<dbReference type="FunCoup" id="P32261">
    <property type="interactions" value="213"/>
</dbReference>
<dbReference type="IntAct" id="P32261">
    <property type="interactions" value="1"/>
</dbReference>
<dbReference type="MINT" id="P32261"/>
<dbReference type="STRING" id="10090.ENSMUSP00000068971"/>
<dbReference type="MEROPS" id="I04.018"/>
<dbReference type="GlyCosmos" id="P32261">
    <property type="glycosylation" value="4 sites, No reported glycans"/>
</dbReference>
<dbReference type="GlyGen" id="P32261">
    <property type="glycosylation" value="5 sites, 2 N-linked glycans (2 sites), 1 O-linked glycan (1 site)"/>
</dbReference>
<dbReference type="iPTMnet" id="P32261"/>
<dbReference type="PhosphoSitePlus" id="P32261"/>
<dbReference type="SwissPalm" id="P32261"/>
<dbReference type="CPTAC" id="non-CPTAC-3338"/>
<dbReference type="jPOST" id="P32261"/>
<dbReference type="PaxDb" id="10090-ENSMUSP00000068971"/>
<dbReference type="PeptideAtlas" id="P32261"/>
<dbReference type="ProteomicsDB" id="282124"/>
<dbReference type="Pumba" id="P32261"/>
<dbReference type="Antibodypedia" id="793">
    <property type="antibodies" value="850 antibodies from 43 providers"/>
</dbReference>
<dbReference type="DNASU" id="11905"/>
<dbReference type="Ensembl" id="ENSMUST00000064725.11">
    <property type="protein sequence ID" value="ENSMUSP00000068971.6"/>
    <property type="gene ID" value="ENSMUSG00000026715.13"/>
</dbReference>
<dbReference type="GeneID" id="11905"/>
<dbReference type="KEGG" id="mmu:11905"/>
<dbReference type="UCSC" id="uc007dem.2">
    <property type="organism name" value="mouse"/>
</dbReference>
<dbReference type="AGR" id="MGI:88095"/>
<dbReference type="CTD" id="462"/>
<dbReference type="MGI" id="MGI:88095">
    <property type="gene designation" value="Serpinc1"/>
</dbReference>
<dbReference type="VEuPathDB" id="HostDB:ENSMUSG00000026715"/>
<dbReference type="eggNOG" id="KOG2392">
    <property type="taxonomic scope" value="Eukaryota"/>
</dbReference>
<dbReference type="GeneTree" id="ENSGT00940000157967"/>
<dbReference type="HOGENOM" id="CLU_023330_0_2_1"/>
<dbReference type="InParanoid" id="P32261"/>
<dbReference type="OMA" id="CQVPTMY"/>
<dbReference type="OrthoDB" id="9440847at2759"/>
<dbReference type="PhylomeDB" id="P32261"/>
<dbReference type="TreeFam" id="TF343094"/>
<dbReference type="Reactome" id="R-MMU-140837">
    <property type="pathway name" value="Intrinsic Pathway of Fibrin Clot Formation"/>
</dbReference>
<dbReference type="Reactome" id="R-MMU-140875">
    <property type="pathway name" value="Common Pathway of Fibrin Clot Formation"/>
</dbReference>
<dbReference type="Reactome" id="R-MMU-381426">
    <property type="pathway name" value="Regulation of Insulin-like Growth Factor (IGF) transport and uptake by Insulin-like Growth Factor Binding Proteins (IGFBPs)"/>
</dbReference>
<dbReference type="Reactome" id="R-MMU-8957275">
    <property type="pathway name" value="Post-translational protein phosphorylation"/>
</dbReference>
<dbReference type="BioGRID-ORCS" id="11905">
    <property type="hits" value="2 hits in 77 CRISPR screens"/>
</dbReference>
<dbReference type="ChiTaRS" id="Serpinc1">
    <property type="organism name" value="mouse"/>
</dbReference>
<dbReference type="PRO" id="PR:P32261"/>
<dbReference type="Proteomes" id="UP000000589">
    <property type="component" value="Chromosome 1"/>
</dbReference>
<dbReference type="RNAct" id="P32261">
    <property type="molecule type" value="protein"/>
</dbReference>
<dbReference type="Bgee" id="ENSMUSG00000026715">
    <property type="expression patterns" value="Expressed in left lobe of liver and 87 other cell types or tissues"/>
</dbReference>
<dbReference type="ExpressionAtlas" id="P32261">
    <property type="expression patterns" value="baseline and differential"/>
</dbReference>
<dbReference type="GO" id="GO:0062023">
    <property type="term" value="C:collagen-containing extracellular matrix"/>
    <property type="evidence" value="ECO:0007005"/>
    <property type="project" value="BHF-UCL"/>
</dbReference>
<dbReference type="GO" id="GO:0005615">
    <property type="term" value="C:extracellular space"/>
    <property type="evidence" value="ECO:0007669"/>
    <property type="project" value="Ensembl"/>
</dbReference>
<dbReference type="GO" id="GO:0008201">
    <property type="term" value="F:heparin binding"/>
    <property type="evidence" value="ECO:0007669"/>
    <property type="project" value="UniProtKB-KW"/>
</dbReference>
<dbReference type="GO" id="GO:0042802">
    <property type="term" value="F:identical protein binding"/>
    <property type="evidence" value="ECO:0007669"/>
    <property type="project" value="Ensembl"/>
</dbReference>
<dbReference type="GO" id="GO:0002020">
    <property type="term" value="F:protease binding"/>
    <property type="evidence" value="ECO:0007669"/>
    <property type="project" value="Ensembl"/>
</dbReference>
<dbReference type="GO" id="GO:0004867">
    <property type="term" value="F:serine-type endopeptidase inhibitor activity"/>
    <property type="evidence" value="ECO:0007669"/>
    <property type="project" value="UniProtKB-KW"/>
</dbReference>
<dbReference type="GO" id="GO:0007596">
    <property type="term" value="P:blood coagulation"/>
    <property type="evidence" value="ECO:0007669"/>
    <property type="project" value="UniProtKB-KW"/>
</dbReference>
<dbReference type="GO" id="GO:0030193">
    <property type="term" value="P:regulation of blood coagulation"/>
    <property type="evidence" value="ECO:0007669"/>
    <property type="project" value="InterPro"/>
</dbReference>
<dbReference type="CDD" id="cd02045">
    <property type="entry name" value="serpinC1_AT3"/>
    <property type="match status" value="1"/>
</dbReference>
<dbReference type="FunFam" id="3.30.497.10:FF:000008">
    <property type="entry name" value="antithrombin-III isoform X1"/>
    <property type="match status" value="1"/>
</dbReference>
<dbReference type="FunFam" id="2.30.39.10:FF:000030">
    <property type="entry name" value="Serpin 2"/>
    <property type="match status" value="1"/>
</dbReference>
<dbReference type="Gene3D" id="2.30.39.10">
    <property type="entry name" value="Alpha-1-antitrypsin, domain 1"/>
    <property type="match status" value="1"/>
</dbReference>
<dbReference type="Gene3D" id="3.30.497.10">
    <property type="entry name" value="Antithrombin, subunit I, domain 2"/>
    <property type="match status" value="1"/>
</dbReference>
<dbReference type="InterPro" id="IPR033829">
    <property type="entry name" value="Antithrombin_3_serpin_domain"/>
</dbReference>
<dbReference type="InterPro" id="IPR023795">
    <property type="entry name" value="Serpin_CS"/>
</dbReference>
<dbReference type="InterPro" id="IPR023796">
    <property type="entry name" value="Serpin_dom"/>
</dbReference>
<dbReference type="InterPro" id="IPR000215">
    <property type="entry name" value="Serpin_fam"/>
</dbReference>
<dbReference type="InterPro" id="IPR036186">
    <property type="entry name" value="Serpin_sf"/>
</dbReference>
<dbReference type="InterPro" id="IPR042178">
    <property type="entry name" value="Serpin_sf_1"/>
</dbReference>
<dbReference type="InterPro" id="IPR042185">
    <property type="entry name" value="Serpin_sf_2"/>
</dbReference>
<dbReference type="PANTHER" id="PTHR11461:SF53">
    <property type="entry name" value="ANTITHROMBIN-III"/>
    <property type="match status" value="1"/>
</dbReference>
<dbReference type="PANTHER" id="PTHR11461">
    <property type="entry name" value="SERINE PROTEASE INHIBITOR, SERPIN"/>
    <property type="match status" value="1"/>
</dbReference>
<dbReference type="Pfam" id="PF00079">
    <property type="entry name" value="Serpin"/>
    <property type="match status" value="1"/>
</dbReference>
<dbReference type="SMART" id="SM00093">
    <property type="entry name" value="SERPIN"/>
    <property type="match status" value="1"/>
</dbReference>
<dbReference type="SUPFAM" id="SSF56574">
    <property type="entry name" value="Serpins"/>
    <property type="match status" value="1"/>
</dbReference>
<dbReference type="PROSITE" id="PS00284">
    <property type="entry name" value="SERPIN"/>
    <property type="match status" value="1"/>
</dbReference>
<feature type="signal peptide" evidence="1">
    <location>
        <begin position="1"/>
        <end position="32"/>
    </location>
</feature>
<feature type="chain" id="PRO_0000032490" description="Antithrombin-III">
    <location>
        <begin position="33"/>
        <end position="465"/>
    </location>
</feature>
<feature type="binding site" evidence="1">
    <location>
        <position position="82"/>
    </location>
    <ligand>
        <name>heparin</name>
        <dbReference type="ChEBI" id="CHEBI:28304"/>
    </ligand>
</feature>
<feature type="binding site" evidence="1">
    <location>
        <position position="162"/>
    </location>
    <ligand>
        <name>heparin</name>
        <dbReference type="ChEBI" id="CHEBI:28304"/>
    </ligand>
</feature>
<feature type="binding site" evidence="1">
    <location>
        <position position="178"/>
    </location>
    <ligand>
        <name>heparin</name>
        <dbReference type="ChEBI" id="CHEBI:28304"/>
    </ligand>
</feature>
<feature type="site" description="Reactive bond">
    <location>
        <begin position="426"/>
        <end position="427"/>
    </location>
</feature>
<feature type="modified residue" description="Phosphothreonine" evidence="2">
    <location>
        <position position="64"/>
    </location>
</feature>
<feature type="modified residue" description="Phosphoserine" evidence="2">
    <location>
        <position position="69"/>
    </location>
</feature>
<feature type="glycosylation site" description="N-linked (GlcNAc...) asparagine" evidence="5">
    <location>
        <position position="129"/>
    </location>
</feature>
<feature type="glycosylation site" description="N-linked (GlcNAc...) asparagine" evidence="5">
    <location>
        <position position="168"/>
    </location>
</feature>
<feature type="glycosylation site" description="N-linked (GlcNAc...) asparagine" evidence="4 5">
    <location>
        <position position="188"/>
    </location>
</feature>
<feature type="glycosylation site" description="N-linked (GlcNAc...) asparagine" evidence="3">
    <location>
        <position position="225"/>
    </location>
</feature>
<feature type="disulfide bond" evidence="1">
    <location>
        <begin position="41"/>
        <end position="161"/>
    </location>
</feature>
<feature type="disulfide bond" evidence="1">
    <location>
        <begin position="54"/>
        <end position="128"/>
    </location>
</feature>
<feature type="disulfide bond" evidence="1">
    <location>
        <begin position="280"/>
        <end position="463"/>
    </location>
</feature>
<protein>
    <recommendedName>
        <fullName>Antithrombin-III</fullName>
        <shortName>ATIII</shortName>
    </recommendedName>
    <alternativeName>
        <fullName>Serpin C1</fullName>
    </alternativeName>
</protein>
<evidence type="ECO:0000250" key="1"/>
<evidence type="ECO:0000250" key="2">
    <source>
        <dbReference type="UniProtKB" id="P01008"/>
    </source>
</evidence>
<evidence type="ECO:0000255" key="3"/>
<evidence type="ECO:0000269" key="4">
    <source>
    </source>
</evidence>
<evidence type="ECO:0000269" key="5">
    <source>
    </source>
</evidence>
<evidence type="ECO:0000305" key="6"/>